<gene>
    <name evidence="1" type="primary">speA</name>
    <name type="ordered locus">Sbal223_2517</name>
</gene>
<feature type="chain" id="PRO_1000184845" description="Biosynthetic arginine decarboxylase">
    <location>
        <begin position="1"/>
        <end position="637"/>
    </location>
</feature>
<feature type="binding site" evidence="1">
    <location>
        <begin position="286"/>
        <end position="296"/>
    </location>
    <ligand>
        <name>substrate</name>
    </ligand>
</feature>
<feature type="modified residue" description="N6-(pyridoxal phosphate)lysine" evidence="1">
    <location>
        <position position="101"/>
    </location>
</feature>
<accession>B8EAI2</accession>
<sequence length="637" mass="70894">MNDWSIDDARAGYNVTHWSQGFYGISDHGEVTVSPDPKNPDYKIGLNELAKDMVKAGVALPVLVRFPQILHHRVNSLCQAFDQAIQKYEYQADYLLVYPIKVNQQQTVVEEILASQASKEVPQLGLEAGSKPELMAVLAMAQKASSVIVCNGYKDNEYIRLALIGEKLGHKVYIVLEKLSELKMVLAESKRLGVTPRLGLRARLAFQGKGKWQASGGEKSKFGLSAAQILLVVEQLKQNDMLDSLQLLHFHLGSQIANIRDIRQGVSEAGRFYCELRALGASVNCFDVGGGLAVDYDGTRSQSNNSMNYGLTEYANNIVNVLTDICNEYEQPMPRIISESGRYLTAHHAVLITDVIGTEAYQPEDIQPPAEESPQLLHNMWHSWSELSGRADQRALIEIYHDSQSDLQEAHSLFALGQLSLAERAWAEQANLRVCHEVQGLLSAKNRYHRPIIDELNEKLADKFFVNFSLFQSLPDAWGIDQVFPVLPLSGLDKAPERRAVMLDITCDSDGIVDQYVDGQGIETTLPVPAWSADSPYLIGFFLVGAYQEILGDMHNLFGDTNSAVVRIEDNGVTNIESVLAGDTVADVLRYVNLDAVAFMRTYEELVNLHIAEDERAQILEELQVGLKGYTYLEDFS</sequence>
<evidence type="ECO:0000255" key="1">
    <source>
        <dbReference type="HAMAP-Rule" id="MF_01417"/>
    </source>
</evidence>
<dbReference type="EC" id="4.1.1.19" evidence="1"/>
<dbReference type="EMBL" id="CP001252">
    <property type="protein sequence ID" value="ACK47011.1"/>
    <property type="molecule type" value="Genomic_DNA"/>
</dbReference>
<dbReference type="RefSeq" id="WP_006081274.1">
    <property type="nucleotide sequence ID" value="NC_011663.1"/>
</dbReference>
<dbReference type="SMR" id="B8EAI2"/>
<dbReference type="KEGG" id="sbp:Sbal223_2517"/>
<dbReference type="HOGENOM" id="CLU_027243_1_0_6"/>
<dbReference type="UniPathway" id="UPA00186">
    <property type="reaction ID" value="UER00284"/>
</dbReference>
<dbReference type="Proteomes" id="UP000002507">
    <property type="component" value="Chromosome"/>
</dbReference>
<dbReference type="GO" id="GO:0008792">
    <property type="term" value="F:arginine decarboxylase activity"/>
    <property type="evidence" value="ECO:0007669"/>
    <property type="project" value="UniProtKB-UniRule"/>
</dbReference>
<dbReference type="GO" id="GO:0046872">
    <property type="term" value="F:metal ion binding"/>
    <property type="evidence" value="ECO:0007669"/>
    <property type="project" value="UniProtKB-KW"/>
</dbReference>
<dbReference type="GO" id="GO:0006527">
    <property type="term" value="P:arginine catabolic process"/>
    <property type="evidence" value="ECO:0007669"/>
    <property type="project" value="InterPro"/>
</dbReference>
<dbReference type="GO" id="GO:0033388">
    <property type="term" value="P:putrescine biosynthetic process from arginine"/>
    <property type="evidence" value="ECO:0007669"/>
    <property type="project" value="TreeGrafter"/>
</dbReference>
<dbReference type="GO" id="GO:0008295">
    <property type="term" value="P:spermidine biosynthetic process"/>
    <property type="evidence" value="ECO:0007669"/>
    <property type="project" value="UniProtKB-UniRule"/>
</dbReference>
<dbReference type="CDD" id="cd06830">
    <property type="entry name" value="PLPDE_III_ADC"/>
    <property type="match status" value="1"/>
</dbReference>
<dbReference type="FunFam" id="1.10.287.3440:FF:000001">
    <property type="entry name" value="Biosynthetic arginine decarboxylase"/>
    <property type="match status" value="1"/>
</dbReference>
<dbReference type="FunFam" id="1.20.58.930:FF:000001">
    <property type="entry name" value="Biosynthetic arginine decarboxylase"/>
    <property type="match status" value="1"/>
</dbReference>
<dbReference type="FunFam" id="2.40.37.10:FF:000001">
    <property type="entry name" value="Biosynthetic arginine decarboxylase"/>
    <property type="match status" value="1"/>
</dbReference>
<dbReference type="FunFam" id="3.20.20.10:FF:000001">
    <property type="entry name" value="Biosynthetic arginine decarboxylase"/>
    <property type="match status" value="1"/>
</dbReference>
<dbReference type="Gene3D" id="1.10.287.3440">
    <property type="match status" value="1"/>
</dbReference>
<dbReference type="Gene3D" id="1.20.58.930">
    <property type="match status" value="1"/>
</dbReference>
<dbReference type="Gene3D" id="3.20.20.10">
    <property type="entry name" value="Alanine racemase"/>
    <property type="match status" value="1"/>
</dbReference>
<dbReference type="Gene3D" id="2.40.37.10">
    <property type="entry name" value="Lyase, Ornithine Decarboxylase, Chain A, domain 1"/>
    <property type="match status" value="1"/>
</dbReference>
<dbReference type="HAMAP" id="MF_01417">
    <property type="entry name" value="SpeA"/>
    <property type="match status" value="1"/>
</dbReference>
<dbReference type="InterPro" id="IPR009006">
    <property type="entry name" value="Ala_racemase/Decarboxylase_C"/>
</dbReference>
<dbReference type="InterPro" id="IPR040634">
    <property type="entry name" value="Arg_decarb_HB"/>
</dbReference>
<dbReference type="InterPro" id="IPR041128">
    <property type="entry name" value="Arg_decarbox_C"/>
</dbReference>
<dbReference type="InterPro" id="IPR002985">
    <property type="entry name" value="Arg_decrbxlase"/>
</dbReference>
<dbReference type="InterPro" id="IPR022644">
    <property type="entry name" value="De-COase2_N"/>
</dbReference>
<dbReference type="InterPro" id="IPR000183">
    <property type="entry name" value="Orn/DAP/Arg_de-COase"/>
</dbReference>
<dbReference type="InterPro" id="IPR029066">
    <property type="entry name" value="PLP-binding_barrel"/>
</dbReference>
<dbReference type="NCBIfam" id="NF003763">
    <property type="entry name" value="PRK05354.1"/>
    <property type="match status" value="1"/>
</dbReference>
<dbReference type="NCBIfam" id="TIGR01273">
    <property type="entry name" value="speA"/>
    <property type="match status" value="1"/>
</dbReference>
<dbReference type="PANTHER" id="PTHR43295">
    <property type="entry name" value="ARGININE DECARBOXYLASE"/>
    <property type="match status" value="1"/>
</dbReference>
<dbReference type="PANTHER" id="PTHR43295:SF9">
    <property type="entry name" value="BIOSYNTHETIC ARGININE DECARBOXYLASE"/>
    <property type="match status" value="1"/>
</dbReference>
<dbReference type="Pfam" id="PF17810">
    <property type="entry name" value="Arg_decarb_HB"/>
    <property type="match status" value="1"/>
</dbReference>
<dbReference type="Pfam" id="PF17944">
    <property type="entry name" value="Arg_decarbox_C"/>
    <property type="match status" value="1"/>
</dbReference>
<dbReference type="Pfam" id="PF02784">
    <property type="entry name" value="Orn_Arg_deC_N"/>
    <property type="match status" value="1"/>
</dbReference>
<dbReference type="PIRSF" id="PIRSF001336">
    <property type="entry name" value="Arg_decrbxlase"/>
    <property type="match status" value="1"/>
</dbReference>
<dbReference type="PRINTS" id="PR01180">
    <property type="entry name" value="ARGDCRBXLASE"/>
</dbReference>
<dbReference type="PRINTS" id="PR01179">
    <property type="entry name" value="ODADCRBXLASE"/>
</dbReference>
<dbReference type="SUPFAM" id="SSF51419">
    <property type="entry name" value="PLP-binding barrel"/>
    <property type="match status" value="1"/>
</dbReference>
<protein>
    <recommendedName>
        <fullName evidence="1">Biosynthetic arginine decarboxylase</fullName>
        <shortName evidence="1">ADC</shortName>
        <ecNumber evidence="1">4.1.1.19</ecNumber>
    </recommendedName>
</protein>
<keyword id="KW-0210">Decarboxylase</keyword>
<keyword id="KW-0456">Lyase</keyword>
<keyword id="KW-0460">Magnesium</keyword>
<keyword id="KW-0479">Metal-binding</keyword>
<keyword id="KW-0620">Polyamine biosynthesis</keyword>
<keyword id="KW-0663">Pyridoxal phosphate</keyword>
<keyword id="KW-0745">Spermidine biosynthesis</keyword>
<name>SPEA_SHEB2</name>
<comment type="function">
    <text evidence="1">Catalyzes the biosynthesis of agmatine from arginine.</text>
</comment>
<comment type="catalytic activity">
    <reaction evidence="1">
        <text>L-arginine + H(+) = agmatine + CO2</text>
        <dbReference type="Rhea" id="RHEA:17641"/>
        <dbReference type="ChEBI" id="CHEBI:15378"/>
        <dbReference type="ChEBI" id="CHEBI:16526"/>
        <dbReference type="ChEBI" id="CHEBI:32682"/>
        <dbReference type="ChEBI" id="CHEBI:58145"/>
        <dbReference type="EC" id="4.1.1.19"/>
    </reaction>
</comment>
<comment type="cofactor">
    <cofactor evidence="1">
        <name>Mg(2+)</name>
        <dbReference type="ChEBI" id="CHEBI:18420"/>
    </cofactor>
</comment>
<comment type="cofactor">
    <cofactor evidence="1">
        <name>pyridoxal 5'-phosphate</name>
        <dbReference type="ChEBI" id="CHEBI:597326"/>
    </cofactor>
</comment>
<comment type="pathway">
    <text evidence="1">Amine and polyamine biosynthesis; agmatine biosynthesis; agmatine from L-arginine: step 1/1.</text>
</comment>
<comment type="similarity">
    <text evidence="1">Belongs to the Orn/Lys/Arg decarboxylase class-II family. SpeA subfamily.</text>
</comment>
<reference key="1">
    <citation type="submission" date="2008-12" db="EMBL/GenBank/DDBJ databases">
        <title>Complete sequence of chromosome of Shewanella baltica OS223.</title>
        <authorList>
            <consortium name="US DOE Joint Genome Institute"/>
            <person name="Lucas S."/>
            <person name="Copeland A."/>
            <person name="Lapidus A."/>
            <person name="Glavina del Rio T."/>
            <person name="Dalin E."/>
            <person name="Tice H."/>
            <person name="Bruce D."/>
            <person name="Goodwin L."/>
            <person name="Pitluck S."/>
            <person name="Chertkov O."/>
            <person name="Meincke L."/>
            <person name="Brettin T."/>
            <person name="Detter J.C."/>
            <person name="Han C."/>
            <person name="Kuske C.R."/>
            <person name="Larimer F."/>
            <person name="Land M."/>
            <person name="Hauser L."/>
            <person name="Kyrpides N."/>
            <person name="Ovchinnikova G."/>
            <person name="Brettar I."/>
            <person name="Rodrigues J."/>
            <person name="Konstantinidis K."/>
            <person name="Tiedje J."/>
        </authorList>
    </citation>
    <scope>NUCLEOTIDE SEQUENCE [LARGE SCALE GENOMIC DNA]</scope>
    <source>
        <strain>OS223</strain>
    </source>
</reference>
<organism>
    <name type="scientific">Shewanella baltica (strain OS223)</name>
    <dbReference type="NCBI Taxonomy" id="407976"/>
    <lineage>
        <taxon>Bacteria</taxon>
        <taxon>Pseudomonadati</taxon>
        <taxon>Pseudomonadota</taxon>
        <taxon>Gammaproteobacteria</taxon>
        <taxon>Alteromonadales</taxon>
        <taxon>Shewanellaceae</taxon>
        <taxon>Shewanella</taxon>
    </lineage>
</organism>
<proteinExistence type="inferred from homology"/>